<feature type="chain" id="PRO_0000183931" description="Heme A synthase COX15">
    <location>
        <begin position="1"/>
        <end position="410"/>
    </location>
</feature>
<feature type="topological domain" description="Mitochondrial matrix" evidence="2">
    <location>
        <begin position="1"/>
        <end position="67"/>
    </location>
</feature>
<feature type="transmembrane region" description="Helical" evidence="3">
    <location>
        <begin position="68"/>
        <end position="88"/>
    </location>
</feature>
<feature type="topological domain" description="Mitochondrial intermembrane" evidence="2">
    <location>
        <begin position="89"/>
        <end position="153"/>
    </location>
</feature>
<feature type="transmembrane region" description="Helical" evidence="3">
    <location>
        <begin position="154"/>
        <end position="171"/>
    </location>
</feature>
<feature type="topological domain" description="Mitochondrial matrix" evidence="2">
    <location>
        <begin position="172"/>
        <end position="183"/>
    </location>
</feature>
<feature type="transmembrane region" description="Helical" evidence="3">
    <location>
        <begin position="184"/>
        <end position="204"/>
    </location>
</feature>
<feature type="topological domain" description="Mitochondrial intermembrane" evidence="2">
    <location>
        <begin position="205"/>
        <end position="226"/>
    </location>
</feature>
<feature type="transmembrane region" description="Helical" evidence="3">
    <location>
        <begin position="227"/>
        <end position="247"/>
    </location>
</feature>
<feature type="topological domain" description="Mitochondrial matrix" evidence="2">
    <location>
        <begin position="248"/>
        <end position="268"/>
    </location>
</feature>
<feature type="transmembrane region" description="Helical" evidence="3">
    <location>
        <begin position="269"/>
        <end position="289"/>
    </location>
</feature>
<feature type="topological domain" description="Mitochondrial intermembrane" evidence="2">
    <location>
        <begin position="290"/>
        <end position="323"/>
    </location>
</feature>
<feature type="transmembrane region" description="Helical" evidence="3">
    <location>
        <begin position="324"/>
        <end position="344"/>
    </location>
</feature>
<feature type="topological domain" description="Mitochondrial matrix" evidence="2">
    <location>
        <begin position="345"/>
        <end position="356"/>
    </location>
</feature>
<feature type="transmembrane region" description="Helical" evidence="3">
    <location>
        <begin position="357"/>
        <end position="377"/>
    </location>
</feature>
<feature type="topological domain" description="Mitochondrial intermembrane" evidence="2">
    <location>
        <begin position="378"/>
        <end position="381"/>
    </location>
</feature>
<feature type="transmembrane region" description="Helical" evidence="3">
    <location>
        <begin position="382"/>
        <end position="402"/>
    </location>
</feature>
<feature type="topological domain" description="Mitochondrial matrix" evidence="2 10">
    <location>
        <begin position="403"/>
        <end position="410"/>
    </location>
</feature>
<feature type="binding site" description="axial binding residue" evidence="1">
    <location>
        <position position="152"/>
    </location>
    <ligand>
        <name>heme o</name>
        <dbReference type="ChEBI" id="CHEBI:24480"/>
    </ligand>
    <ligandPart>
        <name>Fe</name>
        <dbReference type="ChEBI" id="CHEBI:18248"/>
    </ligandPart>
</feature>
<feature type="binding site" description="axial binding residue" evidence="1">
    <location>
        <position position="226"/>
    </location>
    <ligand>
        <name>heme o</name>
        <dbReference type="ChEBI" id="CHEBI:24480"/>
    </ligand>
    <ligandPart>
        <name>Fe</name>
        <dbReference type="ChEBI" id="CHEBI:18248"/>
    </ligandPart>
</feature>
<feature type="binding site" description="axial binding residue" evidence="1">
    <location>
        <position position="326"/>
    </location>
    <ligand>
        <name>heme b</name>
        <dbReference type="ChEBI" id="CHEBI:60344"/>
    </ligand>
    <ligandPart>
        <name>Fe</name>
        <dbReference type="ChEBI" id="CHEBI:18248"/>
    </ligandPart>
</feature>
<feature type="binding site" description="axial binding residue" evidence="1">
    <location>
        <position position="387"/>
    </location>
    <ligand>
        <name>heme b</name>
        <dbReference type="ChEBI" id="CHEBI:60344"/>
    </ligand>
    <ligandPart>
        <name>Fe</name>
        <dbReference type="ChEBI" id="CHEBI:18248"/>
    </ligandPart>
</feature>
<feature type="splice variant" id="VSP_011281" description="In isoform 2." evidence="9">
    <original>VGLGISTLLMYVPTPLAATHQSGSLALLTGALWLMNELRRVPK</original>
    <variation>GPVLFNFTFKISDLDEGIRNI</variation>
    <location>
        <begin position="368"/>
        <end position="410"/>
    </location>
</feature>
<feature type="sequence variant" id="VAR_019596" description="In MC4DN6; dbSNP:rs28939711." evidence="4 5 7">
    <original>R</original>
    <variation>W</variation>
    <location>
        <position position="217"/>
    </location>
</feature>
<feature type="sequence variant" id="VAR_033117" description="In MC4DN6; dbSNP:rs397514662." evidence="6">
    <original>S</original>
    <variation>P</variation>
    <location>
        <position position="344"/>
    </location>
</feature>
<feature type="sequence conflict" description="In Ref. 1; AAD08639/AAD08646." evidence="10" ref="1">
    <original>R</original>
    <variation>K</variation>
    <location>
        <position position="28"/>
    </location>
</feature>
<feature type="sequence conflict" description="In Ref. 3; CAD97781." evidence="10" ref="3">
    <original>T</original>
    <variation>A</variation>
    <location>
        <position position="93"/>
    </location>
</feature>
<feature type="sequence conflict" description="In Ref. 1; AAD08646." evidence="10" ref="1">
    <original>F</original>
    <variation>L</variation>
    <location sequence="Q7KZN9-2">
        <position position="374"/>
    </location>
</feature>
<organism>
    <name type="scientific">Homo sapiens</name>
    <name type="common">Human</name>
    <dbReference type="NCBI Taxonomy" id="9606"/>
    <lineage>
        <taxon>Eukaryota</taxon>
        <taxon>Metazoa</taxon>
        <taxon>Chordata</taxon>
        <taxon>Craniata</taxon>
        <taxon>Vertebrata</taxon>
        <taxon>Euteleostomi</taxon>
        <taxon>Mammalia</taxon>
        <taxon>Eutheria</taxon>
        <taxon>Euarchontoglires</taxon>
        <taxon>Primates</taxon>
        <taxon>Haplorrhini</taxon>
        <taxon>Catarrhini</taxon>
        <taxon>Hominidae</taxon>
        <taxon>Homo</taxon>
    </lineage>
</organism>
<comment type="function">
    <text evidence="2 4">Catalyzes the second reaction in the biosynthesis of heme A, a prosthetic group of mitochondrial cytochrome c oxidase (CcO) (PubMed:12474143). Heme A is synthesized from heme B by two sequential enzymatic reactions catalyzed by heme O synthase (HOS) and heme A synthase (HAS). HAS catalyzes the conversion of heme O to heme A by two successive hydroxylations of the methyl group at C8, in a reaction that involves matrix ferredoxin and ferredoxin reductase. The first hydroxylation forms heme I, the second hydroxylation results in an unstable dihydroxymethyl group, which spontaneously dehydrates, resulting in the formyl group of heme A (By similarity).</text>
</comment>
<comment type="catalytic activity">
    <reaction evidence="1">
        <text>Fe(II)-heme o + 2 A + H2O = Fe(II)-heme a + 2 AH2</text>
        <dbReference type="Rhea" id="RHEA:63388"/>
        <dbReference type="ChEBI" id="CHEBI:13193"/>
        <dbReference type="ChEBI" id="CHEBI:15377"/>
        <dbReference type="ChEBI" id="CHEBI:17499"/>
        <dbReference type="ChEBI" id="CHEBI:60530"/>
        <dbReference type="ChEBI" id="CHEBI:61715"/>
        <dbReference type="EC" id="1.17.99.9"/>
    </reaction>
    <physiologicalReaction direction="left-to-right" evidence="1">
        <dbReference type="Rhea" id="RHEA:63389"/>
    </physiologicalReaction>
</comment>
<comment type="cofactor">
    <cofactor evidence="1">
        <name>heme b</name>
        <dbReference type="ChEBI" id="CHEBI:60344"/>
    </cofactor>
</comment>
<comment type="pathway">
    <text evidence="2">Porphyrin-containing compound metabolism; heme A biosynthesis; heme A from heme O: step 1/1.</text>
</comment>
<comment type="interaction">
    <interactant intactId="EBI-3248549">
        <id>Q7KZN9</id>
    </interactant>
    <interactant intactId="EBI-2255129">
        <id>P30041</id>
        <label>PRDX6</label>
    </interactant>
    <organismsDiffer>false</organismsDiffer>
    <experiments>3</experiments>
</comment>
<comment type="subcellular location">
    <subcellularLocation>
        <location evidence="8">Mitochondrion inner membrane</location>
        <topology evidence="3">Multi-pass membrane protein</topology>
    </subcellularLocation>
</comment>
<comment type="alternative products">
    <event type="alternative splicing"/>
    <isoform>
        <id>Q7KZN9-1</id>
        <name>1</name>
        <name>COX15.1</name>
        <sequence type="displayed"/>
    </isoform>
    <isoform>
        <id>Q7KZN9-2</id>
        <name>2</name>
        <name>COX15.2</name>
        <sequence type="described" ref="VSP_011281"/>
    </isoform>
</comment>
<comment type="tissue specificity">
    <text evidence="8">Predominantly found in tissues characterized by high rates of oxidative phosphorylation (OxPhos), including muscle, heart, and brain.</text>
</comment>
<comment type="domain">
    <text evidence="1">The N-half (TM1-TM4) and C-half (TM5-TM8) domains are connected by an intracellular loop. Each domain is formed from four-helix bundles and they align in a pseudo twofold symmetry manner. The N-half domain is the substrate heme O binding domain and the C-half domain is the cofactor heme B binding domain.</text>
</comment>
<comment type="disease" evidence="4 5 6 7">
    <disease id="DI-03707">
        <name>Mitochondrial complex IV deficiency, nuclear type 6</name>
        <acronym>MC4DN6</acronym>
        <description>An autosomal recessive multisystem disorder with variable manifestations. Some patients present in the neonatal period with encephalomyopathic features, whereas others present later in the first year of life with developmental regression. Clinical features include microcephaly, encephalopathy, hypertrophic cardiomyopathy, persistent lactic acidosis, respiratory distress, hypotonia and seizures. Serum lactate is increased, and laboratory studies show decreased mitochondrial complex IV protein and activity levels.</description>
        <dbReference type="MIM" id="615119"/>
    </disease>
    <text>The disease is caused by variants affecting the gene represented in this entry.</text>
</comment>
<comment type="similarity">
    <text evidence="10">Belongs to the COX15/CtaA family. Type 2 subfamily.</text>
</comment>
<dbReference type="EC" id="1.17.99.9" evidence="2"/>
<dbReference type="EMBL" id="AF026850">
    <property type="protein sequence ID" value="AAD08639.1"/>
    <property type="molecule type" value="mRNA"/>
</dbReference>
<dbReference type="EMBL" id="AF044323">
    <property type="protein sequence ID" value="AAD08646.1"/>
    <property type="molecule type" value="mRNA"/>
</dbReference>
<dbReference type="EMBL" id="BT007129">
    <property type="protein sequence ID" value="AAP35793.1"/>
    <property type="molecule type" value="mRNA"/>
</dbReference>
<dbReference type="EMBL" id="AK291654">
    <property type="protein sequence ID" value="BAF84343.1"/>
    <property type="molecule type" value="mRNA"/>
</dbReference>
<dbReference type="EMBL" id="BX537557">
    <property type="protein sequence ID" value="CAD97781.1"/>
    <property type="molecule type" value="mRNA"/>
</dbReference>
<dbReference type="EMBL" id="AL133353">
    <property type="status" value="NOT_ANNOTATED_CDS"/>
    <property type="molecule type" value="Genomic_DNA"/>
</dbReference>
<dbReference type="EMBL" id="CH471066">
    <property type="protein sequence ID" value="EAW49857.1"/>
    <property type="molecule type" value="Genomic_DNA"/>
</dbReference>
<dbReference type="EMBL" id="BC002382">
    <property type="protein sequence ID" value="AAH02382.3"/>
    <property type="molecule type" value="mRNA"/>
</dbReference>
<dbReference type="EMBL" id="BC013403">
    <property type="protein sequence ID" value="AAH13403.1"/>
    <property type="molecule type" value="mRNA"/>
</dbReference>
<dbReference type="EMBL" id="BC078161">
    <property type="protein sequence ID" value="AAH78161.1"/>
    <property type="molecule type" value="mRNA"/>
</dbReference>
<dbReference type="CCDS" id="CCDS7481.1">
    <molecule id="Q7KZN9-2"/>
</dbReference>
<dbReference type="CCDS" id="CCDS7482.1">
    <molecule id="Q7KZN9-1"/>
</dbReference>
<dbReference type="RefSeq" id="NP_001307903.1">
    <property type="nucleotide sequence ID" value="NM_001320974.1"/>
</dbReference>
<dbReference type="RefSeq" id="NP_001307904.1">
    <property type="nucleotide sequence ID" value="NM_001320975.1"/>
</dbReference>
<dbReference type="RefSeq" id="NP_001307905.1">
    <property type="nucleotide sequence ID" value="NM_001320976.1"/>
</dbReference>
<dbReference type="RefSeq" id="NP_004367.2">
    <molecule id="Q7KZN9-2"/>
    <property type="nucleotide sequence ID" value="NM_004376.6"/>
</dbReference>
<dbReference type="RefSeq" id="NP_510870.1">
    <molecule id="Q7KZN9-1"/>
    <property type="nucleotide sequence ID" value="NM_078470.6"/>
</dbReference>
<dbReference type="SMR" id="Q7KZN9"/>
<dbReference type="BioGRID" id="107747">
    <property type="interactions" value="396"/>
</dbReference>
<dbReference type="CORUM" id="Q7KZN9"/>
<dbReference type="FunCoup" id="Q7KZN9">
    <property type="interactions" value="2673"/>
</dbReference>
<dbReference type="IntAct" id="Q7KZN9">
    <property type="interactions" value="216"/>
</dbReference>
<dbReference type="MINT" id="Q7KZN9"/>
<dbReference type="STRING" id="9606.ENSP00000016171"/>
<dbReference type="TCDB" id="8.A.174.1.1">
    <property type="family name" value="the cytochrome c oxidase cox15 assembly protein (cox15) family"/>
</dbReference>
<dbReference type="GlyGen" id="Q7KZN9">
    <property type="glycosylation" value="1 site, 1 O-linked glycan (1 site)"/>
</dbReference>
<dbReference type="iPTMnet" id="Q7KZN9"/>
<dbReference type="PhosphoSitePlus" id="Q7KZN9"/>
<dbReference type="SwissPalm" id="Q7KZN9"/>
<dbReference type="BioMuta" id="COX15"/>
<dbReference type="DMDM" id="51315906"/>
<dbReference type="jPOST" id="Q7KZN9"/>
<dbReference type="MassIVE" id="Q7KZN9"/>
<dbReference type="PaxDb" id="9606-ENSP00000016171"/>
<dbReference type="PeptideAtlas" id="Q7KZN9"/>
<dbReference type="ProteomicsDB" id="68724">
    <molecule id="Q7KZN9-1"/>
</dbReference>
<dbReference type="ProteomicsDB" id="68725">
    <molecule id="Q7KZN9-2"/>
</dbReference>
<dbReference type="Pumba" id="Q7KZN9"/>
<dbReference type="TopDownProteomics" id="Q7KZN9-1">
    <molecule id="Q7KZN9-1"/>
</dbReference>
<dbReference type="Antibodypedia" id="17500">
    <property type="antibodies" value="174 antibodies from 28 providers"/>
</dbReference>
<dbReference type="DNASU" id="1355"/>
<dbReference type="Ensembl" id="ENST00000016171.6">
    <molecule id="Q7KZN9-1"/>
    <property type="protein sequence ID" value="ENSP00000016171.6"/>
    <property type="gene ID" value="ENSG00000014919.13"/>
</dbReference>
<dbReference type="Ensembl" id="ENST00000370483.9">
    <molecule id="Q7KZN9-2"/>
    <property type="protein sequence ID" value="ENSP00000359514.5"/>
    <property type="gene ID" value="ENSG00000014919.13"/>
</dbReference>
<dbReference type="GeneID" id="1355"/>
<dbReference type="KEGG" id="hsa:1355"/>
<dbReference type="MANE-Select" id="ENST00000016171.6">
    <property type="protein sequence ID" value="ENSP00000016171.6"/>
    <property type="RefSeq nucleotide sequence ID" value="NM_078470.6"/>
    <property type="RefSeq protein sequence ID" value="NP_510870.1"/>
</dbReference>
<dbReference type="UCSC" id="uc001kqb.5">
    <molecule id="Q7KZN9-1"/>
    <property type="organism name" value="human"/>
</dbReference>
<dbReference type="AGR" id="HGNC:2263"/>
<dbReference type="CTD" id="1355"/>
<dbReference type="DisGeNET" id="1355"/>
<dbReference type="GeneCards" id="COX15"/>
<dbReference type="HGNC" id="HGNC:2263">
    <property type="gene designation" value="COX15"/>
</dbReference>
<dbReference type="HPA" id="ENSG00000014919">
    <property type="expression patterns" value="Low tissue specificity"/>
</dbReference>
<dbReference type="MalaCards" id="COX15"/>
<dbReference type="MIM" id="603646">
    <property type="type" value="gene"/>
</dbReference>
<dbReference type="MIM" id="615119">
    <property type="type" value="phenotype"/>
</dbReference>
<dbReference type="neXtProt" id="NX_Q7KZN9"/>
<dbReference type="OpenTargets" id="ENSG00000014919"/>
<dbReference type="Orphanet" id="1561">
    <property type="disease" value="Fatal infantile cytochrome C oxidase deficiency"/>
</dbReference>
<dbReference type="PharmGKB" id="PA26779"/>
<dbReference type="VEuPathDB" id="HostDB:ENSG00000014919"/>
<dbReference type="eggNOG" id="KOG2725">
    <property type="taxonomic scope" value="Eukaryota"/>
</dbReference>
<dbReference type="GeneTree" id="ENSGT00390000002223"/>
<dbReference type="HOGENOM" id="CLU_017627_0_1_1"/>
<dbReference type="InParanoid" id="Q7KZN9"/>
<dbReference type="OMA" id="AFVCYSW"/>
<dbReference type="OrthoDB" id="1726137at2759"/>
<dbReference type="PAN-GO" id="Q7KZN9">
    <property type="GO annotations" value="3 GO annotations based on evolutionary models"/>
</dbReference>
<dbReference type="PhylomeDB" id="Q7KZN9"/>
<dbReference type="TreeFam" id="TF105073"/>
<dbReference type="PathwayCommons" id="Q7KZN9"/>
<dbReference type="Reactome" id="R-HSA-189451">
    <property type="pathway name" value="Heme biosynthesis"/>
</dbReference>
<dbReference type="Reactome" id="R-HSA-9864848">
    <property type="pathway name" value="Complex IV assembly"/>
</dbReference>
<dbReference type="SignaLink" id="Q7KZN9"/>
<dbReference type="UniPathway" id="UPA00269">
    <property type="reaction ID" value="UER00713"/>
</dbReference>
<dbReference type="BioGRID-ORCS" id="1355">
    <property type="hits" value="354 hits in 1154 CRISPR screens"/>
</dbReference>
<dbReference type="ChiTaRS" id="COX15">
    <property type="organism name" value="human"/>
</dbReference>
<dbReference type="GeneWiki" id="COX15"/>
<dbReference type="GenomeRNAi" id="1355"/>
<dbReference type="Pharos" id="Q7KZN9">
    <property type="development level" value="Tbio"/>
</dbReference>
<dbReference type="PRO" id="PR:Q7KZN9"/>
<dbReference type="Proteomes" id="UP000005640">
    <property type="component" value="Chromosome 10"/>
</dbReference>
<dbReference type="RNAct" id="Q7KZN9">
    <property type="molecule type" value="protein"/>
</dbReference>
<dbReference type="Bgee" id="ENSG00000014919">
    <property type="expression patterns" value="Expressed in caput epididymis and 213 other cell types or tissues"/>
</dbReference>
<dbReference type="GO" id="GO:0070069">
    <property type="term" value="C:cytochrome complex"/>
    <property type="evidence" value="ECO:0000314"/>
    <property type="project" value="BHF-UCL"/>
</dbReference>
<dbReference type="GO" id="GO:0005743">
    <property type="term" value="C:mitochondrial inner membrane"/>
    <property type="evidence" value="ECO:0000318"/>
    <property type="project" value="GO_Central"/>
</dbReference>
<dbReference type="GO" id="GO:0005739">
    <property type="term" value="C:mitochondrion"/>
    <property type="evidence" value="ECO:0000314"/>
    <property type="project" value="BHF-UCL"/>
</dbReference>
<dbReference type="GO" id="GO:0005654">
    <property type="term" value="C:nucleoplasm"/>
    <property type="evidence" value="ECO:0000314"/>
    <property type="project" value="HPA"/>
</dbReference>
<dbReference type="GO" id="GO:0098803">
    <property type="term" value="C:respiratory chain complex"/>
    <property type="evidence" value="ECO:0000304"/>
    <property type="project" value="UniProtKB"/>
</dbReference>
<dbReference type="GO" id="GO:0020037">
    <property type="term" value="F:heme binding"/>
    <property type="evidence" value="ECO:0000304"/>
    <property type="project" value="ARUK-UCL"/>
</dbReference>
<dbReference type="GO" id="GO:0046872">
    <property type="term" value="F:metal ion binding"/>
    <property type="evidence" value="ECO:0007669"/>
    <property type="project" value="UniProtKB-KW"/>
</dbReference>
<dbReference type="GO" id="GO:0016653">
    <property type="term" value="F:oxidoreductase activity, acting on NAD(P)H, heme protein as acceptor"/>
    <property type="evidence" value="ECO:0000318"/>
    <property type="project" value="GO_Central"/>
</dbReference>
<dbReference type="GO" id="GO:0016627">
    <property type="term" value="F:oxidoreductase activity, acting on the CH-CH group of donors"/>
    <property type="evidence" value="ECO:0000315"/>
    <property type="project" value="HGNC-UCL"/>
</dbReference>
<dbReference type="GO" id="GO:0017004">
    <property type="term" value="P:cytochrome complex assembly"/>
    <property type="evidence" value="ECO:0000315"/>
    <property type="project" value="HGNC-UCL"/>
</dbReference>
<dbReference type="GO" id="GO:0006784">
    <property type="term" value="P:heme A biosynthetic process"/>
    <property type="evidence" value="ECO:0000316"/>
    <property type="project" value="HGNC-UCL"/>
</dbReference>
<dbReference type="GO" id="GO:0006783">
    <property type="term" value="P:heme biosynthetic process"/>
    <property type="evidence" value="ECO:0000304"/>
    <property type="project" value="Reactome"/>
</dbReference>
<dbReference type="HAMAP" id="MF_01665">
    <property type="entry name" value="HemeA_synth_type2"/>
    <property type="match status" value="1"/>
</dbReference>
<dbReference type="InterPro" id="IPR003780">
    <property type="entry name" value="COX15/CtaA_fam"/>
</dbReference>
<dbReference type="InterPro" id="IPR023754">
    <property type="entry name" value="HemeA_Synthase_type2"/>
</dbReference>
<dbReference type="InterPro" id="IPR009003">
    <property type="entry name" value="Peptidase_S1_PA"/>
</dbReference>
<dbReference type="PANTHER" id="PTHR23289">
    <property type="entry name" value="CYTOCHROME C OXIDASE ASSEMBLY PROTEIN COX15"/>
    <property type="match status" value="1"/>
</dbReference>
<dbReference type="PANTHER" id="PTHR23289:SF2">
    <property type="entry name" value="CYTOCHROME C OXIDASE ASSEMBLY PROTEIN COX15 HOMOLOG"/>
    <property type="match status" value="1"/>
</dbReference>
<dbReference type="Pfam" id="PF02628">
    <property type="entry name" value="COX15-CtaA"/>
    <property type="match status" value="1"/>
</dbReference>
<dbReference type="SUPFAM" id="SSF50494">
    <property type="entry name" value="Trypsin-like serine proteases"/>
    <property type="match status" value="1"/>
</dbReference>
<reference key="1">
    <citation type="journal article" date="1998" name="Genomics">
        <title>Identification and characterization of human cDNAs specific to BCS1, PET112, SCO1, COX15, and COX11, five genes involved in the formation and function of the mitochondrial respiratory chain.</title>
        <authorList>
            <person name="Petruzzella V."/>
            <person name="Tiranti V."/>
            <person name="Fernandez P."/>
            <person name="Ianna P."/>
            <person name="Carrozzo R."/>
            <person name="Zeviani M."/>
        </authorList>
    </citation>
    <scope>NUCLEOTIDE SEQUENCE [MRNA] (ISOFORMS 1 AND 2)</scope>
    <scope>SUBCELLULAR LOCATION</scope>
    <scope>TISSUE SPECIFICITY</scope>
</reference>
<reference key="2">
    <citation type="journal article" date="2003" name="Am. J. Hum. Genet.">
        <title>Mutations in COX15 produce a defect in the mitochondrial heme biosynthetic pathway, causing early-onset fatal hypertrophic cardiomyopathy.</title>
        <authorList>
            <person name="Antonicka H."/>
            <person name="Mattman A."/>
            <person name="Carlson C.G."/>
            <person name="Glerum D.M."/>
            <person name="Hoffbuhr K.C."/>
            <person name="Leary S.C."/>
            <person name="Kennaway N.G."/>
            <person name="Shoubridge E.A."/>
        </authorList>
    </citation>
    <scope>NUCLEOTIDE SEQUENCE [MRNA] (ISOFORM 1)</scope>
    <scope>FUNCTION</scope>
    <scope>VARIANT MC4DN6 TRP-217</scope>
</reference>
<reference key="3">
    <citation type="submission" date="2003-05" db="EMBL/GenBank/DDBJ databases">
        <title>Cloning of human full-length CDSs in BD Creator(TM) system donor vector.</title>
        <authorList>
            <person name="Kalnine N."/>
            <person name="Chen X."/>
            <person name="Rolfs A."/>
            <person name="Halleck A."/>
            <person name="Hines L."/>
            <person name="Eisenstein S."/>
            <person name="Koundinya M."/>
            <person name="Raphael J."/>
            <person name="Moreira D."/>
            <person name="Kelley T."/>
            <person name="LaBaer J."/>
            <person name="Lin Y."/>
            <person name="Phelan M."/>
            <person name="Farmer A."/>
        </authorList>
    </citation>
    <scope>NUCLEOTIDE SEQUENCE [LARGE SCALE MRNA] (ISOFORM 1)</scope>
</reference>
<reference key="4">
    <citation type="journal article" date="2004" name="Nat. Genet.">
        <title>Complete sequencing and characterization of 21,243 full-length human cDNAs.</title>
        <authorList>
            <person name="Ota T."/>
            <person name="Suzuki Y."/>
            <person name="Nishikawa T."/>
            <person name="Otsuki T."/>
            <person name="Sugiyama T."/>
            <person name="Irie R."/>
            <person name="Wakamatsu A."/>
            <person name="Hayashi K."/>
            <person name="Sato H."/>
            <person name="Nagai K."/>
            <person name="Kimura K."/>
            <person name="Makita H."/>
            <person name="Sekine M."/>
            <person name="Obayashi M."/>
            <person name="Nishi T."/>
            <person name="Shibahara T."/>
            <person name="Tanaka T."/>
            <person name="Ishii S."/>
            <person name="Yamamoto J."/>
            <person name="Saito K."/>
            <person name="Kawai Y."/>
            <person name="Isono Y."/>
            <person name="Nakamura Y."/>
            <person name="Nagahari K."/>
            <person name="Murakami K."/>
            <person name="Yasuda T."/>
            <person name="Iwayanagi T."/>
            <person name="Wagatsuma M."/>
            <person name="Shiratori A."/>
            <person name="Sudo H."/>
            <person name="Hosoiri T."/>
            <person name="Kaku Y."/>
            <person name="Kodaira H."/>
            <person name="Kondo H."/>
            <person name="Sugawara M."/>
            <person name="Takahashi M."/>
            <person name="Kanda K."/>
            <person name="Yokoi T."/>
            <person name="Furuya T."/>
            <person name="Kikkawa E."/>
            <person name="Omura Y."/>
            <person name="Abe K."/>
            <person name="Kamihara K."/>
            <person name="Katsuta N."/>
            <person name="Sato K."/>
            <person name="Tanikawa M."/>
            <person name="Yamazaki M."/>
            <person name="Ninomiya K."/>
            <person name="Ishibashi T."/>
            <person name="Yamashita H."/>
            <person name="Murakawa K."/>
            <person name="Fujimori K."/>
            <person name="Tanai H."/>
            <person name="Kimata M."/>
            <person name="Watanabe M."/>
            <person name="Hiraoka S."/>
            <person name="Chiba Y."/>
            <person name="Ishida S."/>
            <person name="Ono Y."/>
            <person name="Takiguchi S."/>
            <person name="Watanabe S."/>
            <person name="Yosida M."/>
            <person name="Hotuta T."/>
            <person name="Kusano J."/>
            <person name="Kanehori K."/>
            <person name="Takahashi-Fujii A."/>
            <person name="Hara H."/>
            <person name="Tanase T.-O."/>
            <person name="Nomura Y."/>
            <person name="Togiya S."/>
            <person name="Komai F."/>
            <person name="Hara R."/>
            <person name="Takeuchi K."/>
            <person name="Arita M."/>
            <person name="Imose N."/>
            <person name="Musashino K."/>
            <person name="Yuuki H."/>
            <person name="Oshima A."/>
            <person name="Sasaki N."/>
            <person name="Aotsuka S."/>
            <person name="Yoshikawa Y."/>
            <person name="Matsunawa H."/>
            <person name="Ichihara T."/>
            <person name="Shiohata N."/>
            <person name="Sano S."/>
            <person name="Moriya S."/>
            <person name="Momiyama H."/>
            <person name="Satoh N."/>
            <person name="Takami S."/>
            <person name="Terashima Y."/>
            <person name="Suzuki O."/>
            <person name="Nakagawa S."/>
            <person name="Senoh A."/>
            <person name="Mizoguchi H."/>
            <person name="Goto Y."/>
            <person name="Shimizu F."/>
            <person name="Wakebe H."/>
            <person name="Hishigaki H."/>
            <person name="Watanabe T."/>
            <person name="Sugiyama A."/>
            <person name="Takemoto M."/>
            <person name="Kawakami B."/>
            <person name="Yamazaki M."/>
            <person name="Watanabe K."/>
            <person name="Kumagai A."/>
            <person name="Itakura S."/>
            <person name="Fukuzumi Y."/>
            <person name="Fujimori Y."/>
            <person name="Komiyama M."/>
            <person name="Tashiro H."/>
            <person name="Tanigami A."/>
            <person name="Fujiwara T."/>
            <person name="Ono T."/>
            <person name="Yamada K."/>
            <person name="Fujii Y."/>
            <person name="Ozaki K."/>
            <person name="Hirao M."/>
            <person name="Ohmori Y."/>
            <person name="Kawabata A."/>
            <person name="Hikiji T."/>
            <person name="Kobatake N."/>
            <person name="Inagaki H."/>
            <person name="Ikema Y."/>
            <person name="Okamoto S."/>
            <person name="Okitani R."/>
            <person name="Kawakami T."/>
            <person name="Noguchi S."/>
            <person name="Itoh T."/>
            <person name="Shigeta K."/>
            <person name="Senba T."/>
            <person name="Matsumura K."/>
            <person name="Nakajima Y."/>
            <person name="Mizuno T."/>
            <person name="Morinaga M."/>
            <person name="Sasaki M."/>
            <person name="Togashi T."/>
            <person name="Oyama M."/>
            <person name="Hata H."/>
            <person name="Watanabe M."/>
            <person name="Komatsu T."/>
            <person name="Mizushima-Sugano J."/>
            <person name="Satoh T."/>
            <person name="Shirai Y."/>
            <person name="Takahashi Y."/>
            <person name="Nakagawa K."/>
            <person name="Okumura K."/>
            <person name="Nagase T."/>
            <person name="Nomura N."/>
            <person name="Kikuchi H."/>
            <person name="Masuho Y."/>
            <person name="Yamashita R."/>
            <person name="Nakai K."/>
            <person name="Yada T."/>
            <person name="Nakamura Y."/>
            <person name="Ohara O."/>
            <person name="Isogai T."/>
            <person name="Sugano S."/>
        </authorList>
    </citation>
    <scope>NUCLEOTIDE SEQUENCE [LARGE SCALE MRNA] (ISOFORM 1)</scope>
    <source>
        <tissue>Placenta</tissue>
    </source>
</reference>
<reference key="5">
    <citation type="journal article" date="2007" name="BMC Genomics">
        <title>The full-ORF clone resource of the German cDNA consortium.</title>
        <authorList>
            <person name="Bechtel S."/>
            <person name="Rosenfelder H."/>
            <person name="Duda A."/>
            <person name="Schmidt C.P."/>
            <person name="Ernst U."/>
            <person name="Wellenreuther R."/>
            <person name="Mehrle A."/>
            <person name="Schuster C."/>
            <person name="Bahr A."/>
            <person name="Bloecker H."/>
            <person name="Heubner D."/>
            <person name="Hoerlein A."/>
            <person name="Michel G."/>
            <person name="Wedler H."/>
            <person name="Koehrer K."/>
            <person name="Ottenwaelder B."/>
            <person name="Poustka A."/>
            <person name="Wiemann S."/>
            <person name="Schupp I."/>
        </authorList>
    </citation>
    <scope>NUCLEOTIDE SEQUENCE [LARGE SCALE MRNA] (ISOFORM 1)</scope>
    <source>
        <tissue>Endometrial tumor</tissue>
    </source>
</reference>
<reference key="6">
    <citation type="journal article" date="2004" name="Nature">
        <title>The DNA sequence and comparative analysis of human chromosome 10.</title>
        <authorList>
            <person name="Deloukas P."/>
            <person name="Earthrowl M.E."/>
            <person name="Grafham D.V."/>
            <person name="Rubenfield M."/>
            <person name="French L."/>
            <person name="Steward C.A."/>
            <person name="Sims S.K."/>
            <person name="Jones M.C."/>
            <person name="Searle S."/>
            <person name="Scott C."/>
            <person name="Howe K."/>
            <person name="Hunt S.E."/>
            <person name="Andrews T.D."/>
            <person name="Gilbert J.G.R."/>
            <person name="Swarbreck D."/>
            <person name="Ashurst J.L."/>
            <person name="Taylor A."/>
            <person name="Battles J."/>
            <person name="Bird C.P."/>
            <person name="Ainscough R."/>
            <person name="Almeida J.P."/>
            <person name="Ashwell R.I.S."/>
            <person name="Ambrose K.D."/>
            <person name="Babbage A.K."/>
            <person name="Bagguley C.L."/>
            <person name="Bailey J."/>
            <person name="Banerjee R."/>
            <person name="Bates K."/>
            <person name="Beasley H."/>
            <person name="Bray-Allen S."/>
            <person name="Brown A.J."/>
            <person name="Brown J.Y."/>
            <person name="Burford D.C."/>
            <person name="Burrill W."/>
            <person name="Burton J."/>
            <person name="Cahill P."/>
            <person name="Camire D."/>
            <person name="Carter N.P."/>
            <person name="Chapman J.C."/>
            <person name="Clark S.Y."/>
            <person name="Clarke G."/>
            <person name="Clee C.M."/>
            <person name="Clegg S."/>
            <person name="Corby N."/>
            <person name="Coulson A."/>
            <person name="Dhami P."/>
            <person name="Dutta I."/>
            <person name="Dunn M."/>
            <person name="Faulkner L."/>
            <person name="Frankish A."/>
            <person name="Frankland J.A."/>
            <person name="Garner P."/>
            <person name="Garnett J."/>
            <person name="Gribble S."/>
            <person name="Griffiths C."/>
            <person name="Grocock R."/>
            <person name="Gustafson E."/>
            <person name="Hammond S."/>
            <person name="Harley J.L."/>
            <person name="Hart E."/>
            <person name="Heath P.D."/>
            <person name="Ho T.P."/>
            <person name="Hopkins B."/>
            <person name="Horne J."/>
            <person name="Howden P.J."/>
            <person name="Huckle E."/>
            <person name="Hynds C."/>
            <person name="Johnson C."/>
            <person name="Johnson D."/>
            <person name="Kana A."/>
            <person name="Kay M."/>
            <person name="Kimberley A.M."/>
            <person name="Kershaw J.K."/>
            <person name="Kokkinaki M."/>
            <person name="Laird G.K."/>
            <person name="Lawlor S."/>
            <person name="Lee H.M."/>
            <person name="Leongamornlert D.A."/>
            <person name="Laird G."/>
            <person name="Lloyd C."/>
            <person name="Lloyd D.M."/>
            <person name="Loveland J."/>
            <person name="Lovell J."/>
            <person name="McLaren S."/>
            <person name="McLay K.E."/>
            <person name="McMurray A."/>
            <person name="Mashreghi-Mohammadi M."/>
            <person name="Matthews L."/>
            <person name="Milne S."/>
            <person name="Nickerson T."/>
            <person name="Nguyen M."/>
            <person name="Overton-Larty E."/>
            <person name="Palmer S.A."/>
            <person name="Pearce A.V."/>
            <person name="Peck A.I."/>
            <person name="Pelan S."/>
            <person name="Phillimore B."/>
            <person name="Porter K."/>
            <person name="Rice C.M."/>
            <person name="Rogosin A."/>
            <person name="Ross M.T."/>
            <person name="Sarafidou T."/>
            <person name="Sehra H.K."/>
            <person name="Shownkeen R."/>
            <person name="Skuce C.D."/>
            <person name="Smith M."/>
            <person name="Standring L."/>
            <person name="Sycamore N."/>
            <person name="Tester J."/>
            <person name="Thorpe A."/>
            <person name="Torcasso W."/>
            <person name="Tracey A."/>
            <person name="Tromans A."/>
            <person name="Tsolas J."/>
            <person name="Wall M."/>
            <person name="Walsh J."/>
            <person name="Wang H."/>
            <person name="Weinstock K."/>
            <person name="West A.P."/>
            <person name="Willey D.L."/>
            <person name="Whitehead S.L."/>
            <person name="Wilming L."/>
            <person name="Wray P.W."/>
            <person name="Young L."/>
            <person name="Chen Y."/>
            <person name="Lovering R.C."/>
            <person name="Moschonas N.K."/>
            <person name="Siebert R."/>
            <person name="Fechtel K."/>
            <person name="Bentley D."/>
            <person name="Durbin R.M."/>
            <person name="Hubbard T."/>
            <person name="Doucette-Stamm L."/>
            <person name="Beck S."/>
            <person name="Smith D.R."/>
            <person name="Rogers J."/>
        </authorList>
    </citation>
    <scope>NUCLEOTIDE SEQUENCE [LARGE SCALE GENOMIC DNA]</scope>
</reference>
<reference key="7">
    <citation type="submission" date="2005-09" db="EMBL/GenBank/DDBJ databases">
        <authorList>
            <person name="Mural R.J."/>
            <person name="Istrail S."/>
            <person name="Sutton G.G."/>
            <person name="Florea L."/>
            <person name="Halpern A.L."/>
            <person name="Mobarry C.M."/>
            <person name="Lippert R."/>
            <person name="Walenz B."/>
            <person name="Shatkay H."/>
            <person name="Dew I."/>
            <person name="Miller J.R."/>
            <person name="Flanigan M.J."/>
            <person name="Edwards N.J."/>
            <person name="Bolanos R."/>
            <person name="Fasulo D."/>
            <person name="Halldorsson B.V."/>
            <person name="Hannenhalli S."/>
            <person name="Turner R."/>
            <person name="Yooseph S."/>
            <person name="Lu F."/>
            <person name="Nusskern D.R."/>
            <person name="Shue B.C."/>
            <person name="Zheng X.H."/>
            <person name="Zhong F."/>
            <person name="Delcher A.L."/>
            <person name="Huson D.H."/>
            <person name="Kravitz S.A."/>
            <person name="Mouchard L."/>
            <person name="Reinert K."/>
            <person name="Remington K.A."/>
            <person name="Clark A.G."/>
            <person name="Waterman M.S."/>
            <person name="Eichler E.E."/>
            <person name="Adams M.D."/>
            <person name="Hunkapiller M.W."/>
            <person name="Myers E.W."/>
            <person name="Venter J.C."/>
        </authorList>
    </citation>
    <scope>NUCLEOTIDE SEQUENCE [LARGE SCALE GENOMIC DNA]</scope>
</reference>
<reference key="8">
    <citation type="journal article" date="2004" name="Genome Res.">
        <title>The status, quality, and expansion of the NIH full-length cDNA project: the Mammalian Gene Collection (MGC).</title>
        <authorList>
            <consortium name="The MGC Project Team"/>
        </authorList>
    </citation>
    <scope>NUCLEOTIDE SEQUENCE [LARGE SCALE MRNA] (ISOFORM 1)</scope>
    <source>
        <tissue>Muscle</tissue>
        <tissue>Skin</tissue>
    </source>
</reference>
<reference key="9">
    <citation type="journal article" date="2011" name="BMC Syst. Biol.">
        <title>Initial characterization of the human central proteome.</title>
        <authorList>
            <person name="Burkard T.R."/>
            <person name="Planyavsky M."/>
            <person name="Kaupe I."/>
            <person name="Breitwieser F.P."/>
            <person name="Buerckstuemmer T."/>
            <person name="Bennett K.L."/>
            <person name="Superti-Furga G."/>
            <person name="Colinge J."/>
        </authorList>
    </citation>
    <scope>IDENTIFICATION BY MASS SPECTROMETRY [LARGE SCALE ANALYSIS]</scope>
</reference>
<reference key="10">
    <citation type="journal article" date="2015" name="Proteomics">
        <title>N-terminome analysis of the human mitochondrial proteome.</title>
        <authorList>
            <person name="Vaca Jacome A.S."/>
            <person name="Rabilloud T."/>
            <person name="Schaeffer-Reiss C."/>
            <person name="Rompais M."/>
            <person name="Ayoub D."/>
            <person name="Lane L."/>
            <person name="Bairoch A."/>
            <person name="Van Dorsselaer A."/>
            <person name="Carapito C."/>
        </authorList>
    </citation>
    <scope>IDENTIFICATION BY MASS SPECTROMETRY [LARGE SCALE ANALYSIS]</scope>
</reference>
<reference key="11">
    <citation type="journal article" date="2004" name="J. Med. Genet.">
        <title>Functional and genetic studies demonstrate that mutation in the COX15 gene can cause Leigh syndrome.</title>
        <authorList>
            <person name="Oquendo C.E."/>
            <person name="Antonicka H."/>
            <person name="Shoubridge E.A."/>
            <person name="Reardon W."/>
            <person name="Brown G.K."/>
        </authorList>
    </citation>
    <scope>VARIANT MC4DN6 TRP-217</scope>
</reference>
<reference key="12">
    <citation type="journal article" date="2005" name="J. Med. Genet.">
        <title>Novel mutations in COX15 in a long surviving Leigh syndrome patient with cytochrome c oxidase deficiency.</title>
        <authorList>
            <person name="Bugiani M."/>
            <person name="Tiranti V."/>
            <person name="Farina L."/>
            <person name="Uziel G."/>
            <person name="Zeviani M."/>
        </authorList>
    </citation>
    <scope>VARIANT MC4DN6 PRO-344</scope>
</reference>
<reference key="13">
    <citation type="journal article" date="2011" name="Am. J. Med. Genet. A">
        <title>Infantile cardioencephalopathy due to a COX15 gene defect: report and review.</title>
        <authorList>
            <person name="Alfadhel M."/>
            <person name="Lillquist Y.P."/>
            <person name="Waters P.J."/>
            <person name="Sinclair G."/>
            <person name="Struys E."/>
            <person name="McFadden D."/>
            <person name="Hendson G."/>
            <person name="Hyams L."/>
            <person name="Shoffner J."/>
            <person name="Vallance H.D."/>
        </authorList>
    </citation>
    <scope>VARIANT MC4DN6 TRP-217</scope>
</reference>
<name>COX15_HUMAN</name>
<protein>
    <recommendedName>
        <fullName>Heme A synthase COX15</fullName>
        <shortName>HAS</shortName>
        <ecNumber evidence="2">1.17.99.9</ecNumber>
    </recommendedName>
    <alternativeName>
        <fullName>Cytochrome c oxidase assembly protein COX15 homolog</fullName>
    </alternativeName>
</protein>
<accession>Q7KZN9</accession>
<accession>A8K6I9</accession>
<accession>O60556</accession>
<accession>O75878</accession>
<accession>Q5TD00</accession>
<accession>Q5TD01</accession>
<accession>Q7Z3Q3</accession>
<accession>Q9NTN0</accession>
<gene>
    <name type="primary">COX15</name>
</gene>
<evidence type="ECO:0000250" key="1">
    <source>
        <dbReference type="UniProtKB" id="P12946"/>
    </source>
</evidence>
<evidence type="ECO:0000250" key="2">
    <source>
        <dbReference type="UniProtKB" id="P40086"/>
    </source>
</evidence>
<evidence type="ECO:0000255" key="3"/>
<evidence type="ECO:0000269" key="4">
    <source>
    </source>
</evidence>
<evidence type="ECO:0000269" key="5">
    <source>
    </source>
</evidence>
<evidence type="ECO:0000269" key="6">
    <source>
    </source>
</evidence>
<evidence type="ECO:0000269" key="7">
    <source>
    </source>
</evidence>
<evidence type="ECO:0000269" key="8">
    <source>
    </source>
</evidence>
<evidence type="ECO:0000303" key="9">
    <source>
    </source>
</evidence>
<evidence type="ECO:0000305" key="10"/>
<proteinExistence type="evidence at protein level"/>
<sequence>MQRLLFPPLRALKGRQYLPLLAPRAAPRAQCDCIRRPLRPGQYSTISEVALQSGRGTVSLPSKAAERVVGRWLLVCSGTVAGAVILGGVTRLTESGLSMVDWHLIKEMKPPTSQEEWEAEFQRYQQFPEFKILNHDMTLTEFKFIWYMEYSHRMWGRLVGLVYILPAAYFWRKGWLSRGMKGRVLALCGLVCFQGLLGWYMVKSGLEEKSDSHDIPRVSQYRLAAHLGSALVLYCASLWTSLSLLLPPHKLPETHQLLQLRRFAHGTAGLVFLTALSGAFVAGLDAGLVYNSFPKMGESWIPEDLFTFSPILRNVFENPTMVQFDHRILGITSVTAITVLYFLSRRIPLPRRTKMAAVTLLALAYTQVGLGISTLLMYVPTPLAATHQSGSLALLTGALWLMNELRRVPK</sequence>
<keyword id="KW-0025">Alternative splicing</keyword>
<keyword id="KW-0225">Disease variant</keyword>
<keyword id="KW-0350">Heme biosynthesis</keyword>
<keyword id="KW-0408">Iron</keyword>
<keyword id="KW-0431">Leigh syndrome</keyword>
<keyword id="KW-0472">Membrane</keyword>
<keyword id="KW-0479">Metal-binding</keyword>
<keyword id="KW-0496">Mitochondrion</keyword>
<keyword id="KW-0999">Mitochondrion inner membrane</keyword>
<keyword id="KW-0560">Oxidoreductase</keyword>
<keyword id="KW-1274">Primary mitochondrial disease</keyword>
<keyword id="KW-1267">Proteomics identification</keyword>
<keyword id="KW-1185">Reference proteome</keyword>
<keyword id="KW-0812">Transmembrane</keyword>
<keyword id="KW-1133">Transmembrane helix</keyword>